<keyword id="KW-0028">Amino-acid biosynthesis</keyword>
<keyword id="KW-0057">Aromatic amino acid biosynthesis</keyword>
<keyword id="KW-0520">NAD</keyword>
<keyword id="KW-0560">Oxidoreductase</keyword>
<keyword id="KW-0827">Tyrosine biosynthesis</keyword>
<dbReference type="EC" id="1.3.1.12"/>
<dbReference type="EMBL" id="BX571856">
    <property type="protein sequence ID" value="CAG40376.1"/>
    <property type="molecule type" value="Genomic_DNA"/>
</dbReference>
<dbReference type="RefSeq" id="WP_000214282.1">
    <property type="nucleotide sequence ID" value="NC_002952.2"/>
</dbReference>
<dbReference type="SMR" id="Q6GH39"/>
<dbReference type="KEGG" id="sar:SAR1378"/>
<dbReference type="HOGENOM" id="CLU_055968_2_1_9"/>
<dbReference type="UniPathway" id="UPA00122">
    <property type="reaction ID" value="UER00961"/>
</dbReference>
<dbReference type="Proteomes" id="UP000000596">
    <property type="component" value="Chromosome"/>
</dbReference>
<dbReference type="GO" id="GO:0070403">
    <property type="term" value="F:NAD+ binding"/>
    <property type="evidence" value="ECO:0007669"/>
    <property type="project" value="InterPro"/>
</dbReference>
<dbReference type="GO" id="GO:0008977">
    <property type="term" value="F:prephenate dehydrogenase (NAD+) activity"/>
    <property type="evidence" value="ECO:0007669"/>
    <property type="project" value="UniProtKB-EC"/>
</dbReference>
<dbReference type="GO" id="GO:0004665">
    <property type="term" value="F:prephenate dehydrogenase (NADP+) activity"/>
    <property type="evidence" value="ECO:0007669"/>
    <property type="project" value="InterPro"/>
</dbReference>
<dbReference type="GO" id="GO:0006571">
    <property type="term" value="P:tyrosine biosynthetic process"/>
    <property type="evidence" value="ECO:0007669"/>
    <property type="project" value="UniProtKB-UniPathway"/>
</dbReference>
<dbReference type="CDD" id="cd04909">
    <property type="entry name" value="ACT_PDH-BS"/>
    <property type="match status" value="1"/>
</dbReference>
<dbReference type="FunFam" id="1.10.3660.10:FF:000003">
    <property type="entry name" value="Prephenate dehydrogenase"/>
    <property type="match status" value="1"/>
</dbReference>
<dbReference type="FunFam" id="3.40.50.720:FF:000208">
    <property type="entry name" value="Prephenate dehydrogenase"/>
    <property type="match status" value="1"/>
</dbReference>
<dbReference type="Gene3D" id="1.10.3660.10">
    <property type="entry name" value="6-phosphogluconate dehydrogenase C-terminal like domain"/>
    <property type="match status" value="1"/>
</dbReference>
<dbReference type="Gene3D" id="3.40.50.720">
    <property type="entry name" value="NAD(P)-binding Rossmann-like Domain"/>
    <property type="match status" value="1"/>
</dbReference>
<dbReference type="InterPro" id="IPR008927">
    <property type="entry name" value="6-PGluconate_DH-like_C_sf"/>
</dbReference>
<dbReference type="InterPro" id="IPR045865">
    <property type="entry name" value="ACT-like_dom_sf"/>
</dbReference>
<dbReference type="InterPro" id="IPR002912">
    <property type="entry name" value="ACT_dom"/>
</dbReference>
<dbReference type="InterPro" id="IPR036291">
    <property type="entry name" value="NAD(P)-bd_dom_sf"/>
</dbReference>
<dbReference type="InterPro" id="IPR046825">
    <property type="entry name" value="PDH_C"/>
</dbReference>
<dbReference type="InterPro" id="IPR046826">
    <property type="entry name" value="PDH_N"/>
</dbReference>
<dbReference type="InterPro" id="IPR050812">
    <property type="entry name" value="Preph/Arog_dehydrog"/>
</dbReference>
<dbReference type="InterPro" id="IPR003099">
    <property type="entry name" value="Prephen_DH"/>
</dbReference>
<dbReference type="NCBIfam" id="NF005106">
    <property type="entry name" value="PRK06545.1-4"/>
    <property type="match status" value="1"/>
</dbReference>
<dbReference type="NCBIfam" id="NF005107">
    <property type="entry name" value="PRK06545.1-5"/>
    <property type="match status" value="1"/>
</dbReference>
<dbReference type="PANTHER" id="PTHR21363">
    <property type="entry name" value="PREPHENATE DEHYDROGENASE"/>
    <property type="match status" value="1"/>
</dbReference>
<dbReference type="PANTHER" id="PTHR21363:SF0">
    <property type="entry name" value="PREPHENATE DEHYDROGENASE [NADP(+)]"/>
    <property type="match status" value="1"/>
</dbReference>
<dbReference type="Pfam" id="PF20463">
    <property type="entry name" value="PDH_C"/>
    <property type="match status" value="1"/>
</dbReference>
<dbReference type="Pfam" id="PF02153">
    <property type="entry name" value="PDH_N"/>
    <property type="match status" value="1"/>
</dbReference>
<dbReference type="SUPFAM" id="SSF48179">
    <property type="entry name" value="6-phosphogluconate dehydrogenase C-terminal domain-like"/>
    <property type="match status" value="1"/>
</dbReference>
<dbReference type="SUPFAM" id="SSF55021">
    <property type="entry name" value="ACT-like"/>
    <property type="match status" value="1"/>
</dbReference>
<dbReference type="SUPFAM" id="SSF51735">
    <property type="entry name" value="NAD(P)-binding Rossmann-fold domains"/>
    <property type="match status" value="1"/>
</dbReference>
<dbReference type="PROSITE" id="PS51671">
    <property type="entry name" value="ACT"/>
    <property type="match status" value="1"/>
</dbReference>
<dbReference type="PROSITE" id="PS51176">
    <property type="entry name" value="PDH_ADH"/>
    <property type="match status" value="1"/>
</dbReference>
<gene>
    <name type="primary">tyrA</name>
    <name type="ordered locus">SAR1378</name>
</gene>
<proteinExistence type="inferred from homology"/>
<organism>
    <name type="scientific">Staphylococcus aureus (strain MRSA252)</name>
    <dbReference type="NCBI Taxonomy" id="282458"/>
    <lineage>
        <taxon>Bacteria</taxon>
        <taxon>Bacillati</taxon>
        <taxon>Bacillota</taxon>
        <taxon>Bacilli</taxon>
        <taxon>Bacillales</taxon>
        <taxon>Staphylococcaceae</taxon>
        <taxon>Staphylococcus</taxon>
    </lineage>
</organism>
<feature type="chain" id="PRO_0000282656" description="Prephenate dehydrogenase">
    <location>
        <begin position="1"/>
        <end position="363"/>
    </location>
</feature>
<feature type="domain" description="Prephenate/arogenate dehydrogenase" evidence="2">
    <location>
        <begin position="2"/>
        <end position="291"/>
    </location>
</feature>
<feature type="domain" description="ACT" evidence="3">
    <location>
        <begin position="296"/>
        <end position="363"/>
    </location>
</feature>
<feature type="binding site" evidence="1">
    <location>
        <begin position="3"/>
        <end position="33"/>
    </location>
    <ligand>
        <name>NAD(+)</name>
        <dbReference type="ChEBI" id="CHEBI:57540"/>
    </ligand>
</feature>
<comment type="catalytic activity">
    <reaction>
        <text>prephenate + NAD(+) = 3-(4-hydroxyphenyl)pyruvate + CO2 + NADH</text>
        <dbReference type="Rhea" id="RHEA:13869"/>
        <dbReference type="ChEBI" id="CHEBI:16526"/>
        <dbReference type="ChEBI" id="CHEBI:29934"/>
        <dbReference type="ChEBI" id="CHEBI:36242"/>
        <dbReference type="ChEBI" id="CHEBI:57540"/>
        <dbReference type="ChEBI" id="CHEBI:57945"/>
        <dbReference type="EC" id="1.3.1.12"/>
    </reaction>
</comment>
<comment type="pathway">
    <text>Amino-acid biosynthesis; L-tyrosine biosynthesis; (4-hydroxyphenyl)pyruvate from prephenate (NAD(+) route): step 1/1.</text>
</comment>
<comment type="similarity">
    <text evidence="4">Belongs to the prephenate/arogenate dehydrogenase family.</text>
</comment>
<reference key="1">
    <citation type="journal article" date="2004" name="Proc. Natl. Acad. Sci. U.S.A.">
        <title>Complete genomes of two clinical Staphylococcus aureus strains: evidence for the rapid evolution of virulence and drug resistance.</title>
        <authorList>
            <person name="Holden M.T.G."/>
            <person name="Feil E.J."/>
            <person name="Lindsay J.A."/>
            <person name="Peacock S.J."/>
            <person name="Day N.P.J."/>
            <person name="Enright M.C."/>
            <person name="Foster T.J."/>
            <person name="Moore C.E."/>
            <person name="Hurst L."/>
            <person name="Atkin R."/>
            <person name="Barron A."/>
            <person name="Bason N."/>
            <person name="Bentley S.D."/>
            <person name="Chillingworth C."/>
            <person name="Chillingworth T."/>
            <person name="Churcher C."/>
            <person name="Clark L."/>
            <person name="Corton C."/>
            <person name="Cronin A."/>
            <person name="Doggett J."/>
            <person name="Dowd L."/>
            <person name="Feltwell T."/>
            <person name="Hance Z."/>
            <person name="Harris B."/>
            <person name="Hauser H."/>
            <person name="Holroyd S."/>
            <person name="Jagels K."/>
            <person name="James K.D."/>
            <person name="Lennard N."/>
            <person name="Line A."/>
            <person name="Mayes R."/>
            <person name="Moule S."/>
            <person name="Mungall K."/>
            <person name="Ormond D."/>
            <person name="Quail M.A."/>
            <person name="Rabbinowitsch E."/>
            <person name="Rutherford K.M."/>
            <person name="Sanders M."/>
            <person name="Sharp S."/>
            <person name="Simmonds M."/>
            <person name="Stevens K."/>
            <person name="Whitehead S."/>
            <person name="Barrell B.G."/>
            <person name="Spratt B.G."/>
            <person name="Parkhill J."/>
        </authorList>
    </citation>
    <scope>NUCLEOTIDE SEQUENCE [LARGE SCALE GENOMIC DNA]</scope>
    <source>
        <strain>MRSA252</strain>
    </source>
</reference>
<name>TYRA_STAAR</name>
<sequence>MTTVLFVGLGLIGGSLASNIKYHNPNTNIIAYDADTSQLDKAKSIGIINEKCLNYSEAIKKADVIIYATPVAITNKYLSELIHMPTKPGVIVSDTGSTKAMIQQHECSLLKHNIHLVSGHPMAGSHKSGVLNAKKHLFENAYYILVYNEPRNEQAANTLKELLSPTLAKFIVTTAEEHDYVTSVVSHLPHIVASSLVHVSQKNSQEHHLVNKLAAGGFRDITRIASSNAQMWKDITLSNKTYILEMIRQLKSQFQDLERLIESNDSEKLLSFFAEAKSYRDALPAKQLGGLNTAYDLYVDIPDESGMISKVTYILSLHNISISNLRILEVREDIYGALKISFKNPTDRERGMQALSDFDCYIQ</sequence>
<protein>
    <recommendedName>
        <fullName>Prephenate dehydrogenase</fullName>
        <shortName>PDH</shortName>
        <ecNumber>1.3.1.12</ecNumber>
    </recommendedName>
</protein>
<accession>Q6GH39</accession>
<evidence type="ECO:0000255" key="1"/>
<evidence type="ECO:0000255" key="2">
    <source>
        <dbReference type="PROSITE-ProRule" id="PRU00522"/>
    </source>
</evidence>
<evidence type="ECO:0000255" key="3">
    <source>
        <dbReference type="PROSITE-ProRule" id="PRU01007"/>
    </source>
</evidence>
<evidence type="ECO:0000305" key="4"/>